<comment type="function">
    <text>This protein may play a role in the biosynthesis of the prosthetic group of nitrogenase (FeMo cofactor).</text>
</comment>
<comment type="pathway">
    <text>Cofactor biosynthesis; Fe-Mo cofactor biosynthesis.</text>
</comment>
<comment type="similarity">
    <text evidence="1">Belongs to the NifD/NifK/NifE/NifN family.</text>
</comment>
<gene>
    <name type="primary">nifE</name>
    <name type="ordered locus">RA0452</name>
    <name type="ORF">SMa0830</name>
</gene>
<feature type="chain" id="PRO_0000153121" description="Nitrogenase iron-molybdenum cofactor biosynthesis protein NifE">
    <location>
        <begin position="1"/>
        <end position="476"/>
    </location>
</feature>
<dbReference type="EMBL" id="AE006469">
    <property type="protein sequence ID" value="AAK65110.1"/>
    <property type="molecule type" value="Genomic_DNA"/>
</dbReference>
<dbReference type="PIR" id="D95318">
    <property type="entry name" value="D95318"/>
</dbReference>
<dbReference type="RefSeq" id="NP_435698.1">
    <property type="nucleotide sequence ID" value="NC_003037.1"/>
</dbReference>
<dbReference type="RefSeq" id="WP_010967435.1">
    <property type="nucleotide sequence ID" value="NC_003037.1"/>
</dbReference>
<dbReference type="SMR" id="Q92ZL2"/>
<dbReference type="EnsemblBacteria" id="AAK65110">
    <property type="protein sequence ID" value="AAK65110"/>
    <property type="gene ID" value="SMa0830"/>
</dbReference>
<dbReference type="KEGG" id="sme:SMa0830"/>
<dbReference type="PATRIC" id="fig|266834.11.peg.465"/>
<dbReference type="HOGENOM" id="CLU_025876_1_1_5"/>
<dbReference type="OrthoDB" id="5717231at2"/>
<dbReference type="UniPathway" id="UPA00782"/>
<dbReference type="Proteomes" id="UP000001976">
    <property type="component" value="Plasmid pSymA"/>
</dbReference>
<dbReference type="GO" id="GO:0016163">
    <property type="term" value="F:nitrogenase activity"/>
    <property type="evidence" value="ECO:0007669"/>
    <property type="project" value="InterPro"/>
</dbReference>
<dbReference type="GO" id="GO:0009399">
    <property type="term" value="P:nitrogen fixation"/>
    <property type="evidence" value="ECO:0007669"/>
    <property type="project" value="UniProtKB-KW"/>
</dbReference>
<dbReference type="GO" id="GO:0065003">
    <property type="term" value="P:protein-containing complex assembly"/>
    <property type="evidence" value="ECO:0007669"/>
    <property type="project" value="InterPro"/>
</dbReference>
<dbReference type="Gene3D" id="3.40.50.12380">
    <property type="entry name" value="Nitrogenase MoFe cofactor biosynthesis protein NifE, C-terminal"/>
    <property type="match status" value="1"/>
</dbReference>
<dbReference type="Gene3D" id="3.40.50.1980">
    <property type="entry name" value="Nitrogenase molybdenum iron protein domain"/>
    <property type="match status" value="1"/>
</dbReference>
<dbReference type="InterPro" id="IPR000510">
    <property type="entry name" value="Nase/OxRdtase_comp1"/>
</dbReference>
<dbReference type="InterPro" id="IPR000318">
    <property type="entry name" value="Nase_comp1_CS"/>
</dbReference>
<dbReference type="InterPro" id="IPR005973">
    <property type="entry name" value="NifE"/>
</dbReference>
<dbReference type="InterPro" id="IPR049939">
    <property type="entry name" value="NifE-like"/>
</dbReference>
<dbReference type="NCBIfam" id="TIGR01283">
    <property type="entry name" value="nifE"/>
    <property type="match status" value="1"/>
</dbReference>
<dbReference type="PANTHER" id="PTHR42956">
    <property type="entry name" value="NITROGENASE IRON-MOLYBDENUM COFACTOR BIOSYNTHESIS PROTEIN NIFE"/>
    <property type="match status" value="1"/>
</dbReference>
<dbReference type="PANTHER" id="PTHR42956:SF1">
    <property type="entry name" value="NITROGENASE IRON-MOLYBDENUM COFACTOR BIOSYNTHESIS PROTEIN NIFE"/>
    <property type="match status" value="1"/>
</dbReference>
<dbReference type="Pfam" id="PF00148">
    <property type="entry name" value="Oxidored_nitro"/>
    <property type="match status" value="1"/>
</dbReference>
<dbReference type="SUPFAM" id="SSF53807">
    <property type="entry name" value="Helical backbone' metal receptor"/>
    <property type="match status" value="1"/>
</dbReference>
<dbReference type="PROSITE" id="PS00699">
    <property type="entry name" value="NITROGENASE_1_1"/>
    <property type="match status" value="1"/>
</dbReference>
<dbReference type="PROSITE" id="PS00090">
    <property type="entry name" value="NITROGENASE_1_2"/>
    <property type="match status" value="1"/>
</dbReference>
<keyword id="KW-0535">Nitrogen fixation</keyword>
<keyword id="KW-0614">Plasmid</keyword>
<keyword id="KW-1185">Reference proteome</keyword>
<reference key="1">
    <citation type="journal article" date="2001" name="Proc. Natl. Acad. Sci. U.S.A.">
        <title>Nucleotide sequence and predicted functions of the entire Sinorhizobium meliloti pSymA megaplasmid.</title>
        <authorList>
            <person name="Barnett M.J."/>
            <person name="Fisher R.F."/>
            <person name="Jones T."/>
            <person name="Komp C."/>
            <person name="Abola A.P."/>
            <person name="Barloy-Hubler F."/>
            <person name="Bowser L."/>
            <person name="Capela D."/>
            <person name="Galibert F."/>
            <person name="Gouzy J."/>
            <person name="Gurjal M."/>
            <person name="Hong A."/>
            <person name="Huizar L."/>
            <person name="Hyman R.W."/>
            <person name="Kahn D."/>
            <person name="Kahn M.L."/>
            <person name="Kalman S."/>
            <person name="Keating D.H."/>
            <person name="Palm C."/>
            <person name="Peck M.C."/>
            <person name="Surzycki R."/>
            <person name="Wells D.H."/>
            <person name="Yeh K.-C."/>
            <person name="Davis R.W."/>
            <person name="Federspiel N.A."/>
            <person name="Long S.R."/>
        </authorList>
    </citation>
    <scope>NUCLEOTIDE SEQUENCE [LARGE SCALE GENOMIC DNA]</scope>
    <source>
        <strain>1021</strain>
    </source>
</reference>
<reference key="2">
    <citation type="journal article" date="2001" name="Science">
        <title>The composite genome of the legume symbiont Sinorhizobium meliloti.</title>
        <authorList>
            <person name="Galibert F."/>
            <person name="Finan T.M."/>
            <person name="Long S.R."/>
            <person name="Puehler A."/>
            <person name="Abola P."/>
            <person name="Ampe F."/>
            <person name="Barloy-Hubler F."/>
            <person name="Barnett M.J."/>
            <person name="Becker A."/>
            <person name="Boistard P."/>
            <person name="Bothe G."/>
            <person name="Boutry M."/>
            <person name="Bowser L."/>
            <person name="Buhrmester J."/>
            <person name="Cadieu E."/>
            <person name="Capela D."/>
            <person name="Chain P."/>
            <person name="Cowie A."/>
            <person name="Davis R.W."/>
            <person name="Dreano S."/>
            <person name="Federspiel N.A."/>
            <person name="Fisher R.F."/>
            <person name="Gloux S."/>
            <person name="Godrie T."/>
            <person name="Goffeau A."/>
            <person name="Golding B."/>
            <person name="Gouzy J."/>
            <person name="Gurjal M."/>
            <person name="Hernandez-Lucas I."/>
            <person name="Hong A."/>
            <person name="Huizar L."/>
            <person name="Hyman R.W."/>
            <person name="Jones T."/>
            <person name="Kahn D."/>
            <person name="Kahn M.L."/>
            <person name="Kalman S."/>
            <person name="Keating D.H."/>
            <person name="Kiss E."/>
            <person name="Komp C."/>
            <person name="Lelaure V."/>
            <person name="Masuy D."/>
            <person name="Palm C."/>
            <person name="Peck M.C."/>
            <person name="Pohl T.M."/>
            <person name="Portetelle D."/>
            <person name="Purnelle B."/>
            <person name="Ramsperger U."/>
            <person name="Surzycki R."/>
            <person name="Thebault P."/>
            <person name="Vandenbol M."/>
            <person name="Vorhoelter F.J."/>
            <person name="Weidner S."/>
            <person name="Wells D.H."/>
            <person name="Wong K."/>
            <person name="Yeh K.-C."/>
            <person name="Batut J."/>
        </authorList>
    </citation>
    <scope>NUCLEOTIDE SEQUENCE [LARGE SCALE GENOMIC DNA]</scope>
    <source>
        <strain>1021</strain>
    </source>
</reference>
<name>NIFE_RHIME</name>
<organism>
    <name type="scientific">Rhizobium meliloti (strain 1021)</name>
    <name type="common">Ensifer meliloti</name>
    <name type="synonym">Sinorhizobium meliloti</name>
    <dbReference type="NCBI Taxonomy" id="266834"/>
    <lineage>
        <taxon>Bacteria</taxon>
        <taxon>Pseudomonadati</taxon>
        <taxon>Pseudomonadota</taxon>
        <taxon>Alphaproteobacteria</taxon>
        <taxon>Hyphomicrobiales</taxon>
        <taxon>Rhizobiaceae</taxon>
        <taxon>Sinorhizobium/Ensifer group</taxon>
        <taxon>Sinorhizobium</taxon>
    </lineage>
</organism>
<evidence type="ECO:0000305" key="1"/>
<proteinExistence type="inferred from homology"/>
<protein>
    <recommendedName>
        <fullName>Nitrogenase iron-molybdenum cofactor biosynthesis protein NifE</fullName>
    </recommendedName>
</protein>
<sequence length="476" mass="52359">MPSLSAKNQAFFNEPACERNRSKDFKVRKKGCSQPPMPGAAAGGCAFDGAKVALQPITNVAHLIHAPLACEGNSWDNRGTASSSHMLWRTSFTTDVTEFDVVMGHSERKLFKAIREINEAYAPAAVFVYATCVTALIGDDIDAVCRRAAEKFGLPVVPVNAPGFVGSKNLGNKLAGEALLDHVIGTVEPDDARSSDINILGEFNLSGEFWQVRPLLDKLGVRVRACIPGDSRYLDIATAHRARAAMMVCSTALINLARKMLERWDIPFFEGSFYGITDTSEALRQIAGLLVKQGAGPDLISRTEALIVEEEARAWRRLEVYRPRLQGKRVLLNTGGVKSWSVAHALMEIGLEIVGTSIKKSTDNDKERLKQMLTNDSRMSGATTPRELYSALSDHKADIMLSGGRTQFIALKAKMPWLDINQERQHSYAGYHGVVELARQIDLSIHNPIWAQVREAAPWEMAPARGEEMSEEEALL</sequence>
<accession>Q92ZL2</accession>
<geneLocation type="plasmid">
    <name>pSymA</name>
    <name>megaplasmid 1</name>
</geneLocation>